<organism>
    <name type="scientific">Xanthomonas euvesicatoria pv. vesicatoria (strain 85-10)</name>
    <name type="common">Xanthomonas campestris pv. vesicatoria</name>
    <dbReference type="NCBI Taxonomy" id="316273"/>
    <lineage>
        <taxon>Bacteria</taxon>
        <taxon>Pseudomonadati</taxon>
        <taxon>Pseudomonadota</taxon>
        <taxon>Gammaproteobacteria</taxon>
        <taxon>Lysobacterales</taxon>
        <taxon>Lysobacteraceae</taxon>
        <taxon>Xanthomonas</taxon>
    </lineage>
</organism>
<evidence type="ECO:0000255" key="1">
    <source>
        <dbReference type="HAMAP-Rule" id="MF_00115"/>
    </source>
</evidence>
<keyword id="KW-0997">Cell inner membrane</keyword>
<keyword id="KW-1003">Cell membrane</keyword>
<keyword id="KW-0407">Ion channel</keyword>
<keyword id="KW-0406">Ion transport</keyword>
<keyword id="KW-0472">Membrane</keyword>
<keyword id="KW-0812">Transmembrane</keyword>
<keyword id="KW-1133">Transmembrane helix</keyword>
<keyword id="KW-0813">Transport</keyword>
<comment type="function">
    <text evidence="1">Channel that opens in response to stretch forces in the membrane lipid bilayer. May participate in the regulation of osmotic pressure changes within the cell.</text>
</comment>
<comment type="subunit">
    <text evidence="1">Homopentamer.</text>
</comment>
<comment type="subcellular location">
    <subcellularLocation>
        <location evidence="1">Cell inner membrane</location>
        <topology evidence="1">Multi-pass membrane protein</topology>
    </subcellularLocation>
</comment>
<comment type="similarity">
    <text evidence="1">Belongs to the MscL family.</text>
</comment>
<dbReference type="EMBL" id="AM039952">
    <property type="protein sequence ID" value="CAJ25155.1"/>
    <property type="molecule type" value="Genomic_DNA"/>
</dbReference>
<dbReference type="RefSeq" id="WP_003487203.1">
    <property type="nucleotide sequence ID" value="NZ_CP017190.1"/>
</dbReference>
<dbReference type="SMR" id="Q3BQ08"/>
<dbReference type="STRING" id="456327.BJD11_05615"/>
<dbReference type="GeneID" id="97511511"/>
<dbReference type="KEGG" id="xcv:XCV3424"/>
<dbReference type="eggNOG" id="COG1970">
    <property type="taxonomic scope" value="Bacteria"/>
</dbReference>
<dbReference type="HOGENOM" id="CLU_095787_0_0_6"/>
<dbReference type="Proteomes" id="UP000007069">
    <property type="component" value="Chromosome"/>
</dbReference>
<dbReference type="GO" id="GO:0005886">
    <property type="term" value="C:plasma membrane"/>
    <property type="evidence" value="ECO:0007669"/>
    <property type="project" value="UniProtKB-SubCell"/>
</dbReference>
<dbReference type="GO" id="GO:0008381">
    <property type="term" value="F:mechanosensitive monoatomic ion channel activity"/>
    <property type="evidence" value="ECO:0007669"/>
    <property type="project" value="UniProtKB-UniRule"/>
</dbReference>
<dbReference type="FunFam" id="1.10.1200.120:FF:000001">
    <property type="entry name" value="Large-conductance mechanosensitive channel"/>
    <property type="match status" value="1"/>
</dbReference>
<dbReference type="Gene3D" id="1.10.1200.120">
    <property type="entry name" value="Large-conductance mechanosensitive channel, MscL, domain 1"/>
    <property type="match status" value="1"/>
</dbReference>
<dbReference type="HAMAP" id="MF_00115">
    <property type="entry name" value="MscL"/>
    <property type="match status" value="1"/>
</dbReference>
<dbReference type="InterPro" id="IPR019823">
    <property type="entry name" value="Mechanosensitive_channel_CS"/>
</dbReference>
<dbReference type="InterPro" id="IPR001185">
    <property type="entry name" value="MS_channel"/>
</dbReference>
<dbReference type="InterPro" id="IPR037673">
    <property type="entry name" value="MSC/AndL"/>
</dbReference>
<dbReference type="InterPro" id="IPR036019">
    <property type="entry name" value="MscL_channel"/>
</dbReference>
<dbReference type="NCBIfam" id="TIGR00220">
    <property type="entry name" value="mscL"/>
    <property type="match status" value="1"/>
</dbReference>
<dbReference type="NCBIfam" id="NF001843">
    <property type="entry name" value="PRK00567.1-4"/>
    <property type="match status" value="1"/>
</dbReference>
<dbReference type="PANTHER" id="PTHR30266:SF2">
    <property type="entry name" value="LARGE-CONDUCTANCE MECHANOSENSITIVE CHANNEL"/>
    <property type="match status" value="1"/>
</dbReference>
<dbReference type="PANTHER" id="PTHR30266">
    <property type="entry name" value="MECHANOSENSITIVE CHANNEL MSCL"/>
    <property type="match status" value="1"/>
</dbReference>
<dbReference type="Pfam" id="PF01741">
    <property type="entry name" value="MscL"/>
    <property type="match status" value="1"/>
</dbReference>
<dbReference type="PRINTS" id="PR01264">
    <property type="entry name" value="MECHCHANNEL"/>
</dbReference>
<dbReference type="SUPFAM" id="SSF81330">
    <property type="entry name" value="Gated mechanosensitive channel"/>
    <property type="match status" value="1"/>
</dbReference>
<dbReference type="PROSITE" id="PS01327">
    <property type="entry name" value="MSCL"/>
    <property type="match status" value="1"/>
</dbReference>
<proteinExistence type="inferred from homology"/>
<feature type="chain" id="PRO_0000238052" description="Large-conductance mechanosensitive channel">
    <location>
        <begin position="1"/>
        <end position="143"/>
    </location>
</feature>
<feature type="transmembrane region" description="Helical" evidence="1">
    <location>
        <begin position="16"/>
        <end position="36"/>
    </location>
</feature>
<feature type="transmembrane region" description="Helical" evidence="1">
    <location>
        <begin position="84"/>
        <end position="104"/>
    </location>
</feature>
<name>MSCL_XANE5</name>
<reference key="1">
    <citation type="journal article" date="2005" name="J. Bacteriol.">
        <title>Insights into genome plasticity and pathogenicity of the plant pathogenic Bacterium Xanthomonas campestris pv. vesicatoria revealed by the complete genome sequence.</title>
        <authorList>
            <person name="Thieme F."/>
            <person name="Koebnik R."/>
            <person name="Bekel T."/>
            <person name="Berger C."/>
            <person name="Boch J."/>
            <person name="Buettner D."/>
            <person name="Caldana C."/>
            <person name="Gaigalat L."/>
            <person name="Goesmann A."/>
            <person name="Kay S."/>
            <person name="Kirchner O."/>
            <person name="Lanz C."/>
            <person name="Linke B."/>
            <person name="McHardy A.C."/>
            <person name="Meyer F."/>
            <person name="Mittenhuber G."/>
            <person name="Nies D.H."/>
            <person name="Niesbach-Kloesgen U."/>
            <person name="Patschkowski T."/>
            <person name="Rueckert C."/>
            <person name="Rupp O."/>
            <person name="Schneiker S."/>
            <person name="Schuster S.C."/>
            <person name="Vorhoelter F.J."/>
            <person name="Weber E."/>
            <person name="Puehler A."/>
            <person name="Bonas U."/>
            <person name="Bartels D."/>
            <person name="Kaiser O."/>
        </authorList>
    </citation>
    <scope>NUCLEOTIDE SEQUENCE [LARGE SCALE GENOMIC DNA]</scope>
    <source>
        <strain>85-10</strain>
    </source>
</reference>
<gene>
    <name evidence="1" type="primary">mscL</name>
    <name type="ordered locus">XCV3424</name>
</gene>
<sequence length="143" mass="15392">MGMVSEFKQFAMRGNVIDLAVGVVIGAAFGKIVTALVEKIIMPPIGWAIGNVDFSRLAWVLKPAGVDATGKEIPAVAIGYGDFINTVVQFLIIAFAIFLVVKLINRVTHRKPDAPKGPSEEVLLLREIRDALKNDTLKPPGAL</sequence>
<accession>Q3BQ08</accession>
<protein>
    <recommendedName>
        <fullName evidence="1">Large-conductance mechanosensitive channel</fullName>
    </recommendedName>
</protein>